<organism>
    <name type="scientific">Clostridium tetani (strain Massachusetts / E88)</name>
    <dbReference type="NCBI Taxonomy" id="212717"/>
    <lineage>
        <taxon>Bacteria</taxon>
        <taxon>Bacillati</taxon>
        <taxon>Bacillota</taxon>
        <taxon>Clostridia</taxon>
        <taxon>Eubacteriales</taxon>
        <taxon>Clostridiaceae</taxon>
        <taxon>Clostridium</taxon>
    </lineage>
</organism>
<proteinExistence type="inferred from homology"/>
<comment type="catalytic activity">
    <reaction evidence="1">
        <text>tRNA(Phe) + L-phenylalanine + ATP = L-phenylalanyl-tRNA(Phe) + AMP + diphosphate + H(+)</text>
        <dbReference type="Rhea" id="RHEA:19413"/>
        <dbReference type="Rhea" id="RHEA-COMP:9668"/>
        <dbReference type="Rhea" id="RHEA-COMP:9699"/>
        <dbReference type="ChEBI" id="CHEBI:15378"/>
        <dbReference type="ChEBI" id="CHEBI:30616"/>
        <dbReference type="ChEBI" id="CHEBI:33019"/>
        <dbReference type="ChEBI" id="CHEBI:58095"/>
        <dbReference type="ChEBI" id="CHEBI:78442"/>
        <dbReference type="ChEBI" id="CHEBI:78531"/>
        <dbReference type="ChEBI" id="CHEBI:456215"/>
        <dbReference type="EC" id="6.1.1.20"/>
    </reaction>
</comment>
<comment type="cofactor">
    <cofactor evidence="1">
        <name>Mg(2+)</name>
        <dbReference type="ChEBI" id="CHEBI:18420"/>
    </cofactor>
    <text evidence="1">Binds 2 magnesium ions per tetramer.</text>
</comment>
<comment type="subunit">
    <text evidence="1">Tetramer of two alpha and two beta subunits.</text>
</comment>
<comment type="subcellular location">
    <subcellularLocation>
        <location evidence="1">Cytoplasm</location>
    </subcellularLocation>
</comment>
<comment type="similarity">
    <text evidence="1">Belongs to the phenylalanyl-tRNA synthetase beta subunit family. Type 1 subfamily.</text>
</comment>
<protein>
    <recommendedName>
        <fullName evidence="1">Phenylalanine--tRNA ligase beta subunit</fullName>
        <ecNumber evidence="1">6.1.1.20</ecNumber>
    </recommendedName>
    <alternativeName>
        <fullName evidence="1">Phenylalanyl-tRNA synthetase beta subunit</fullName>
        <shortName evidence="1">PheRS</shortName>
    </alternativeName>
</protein>
<name>SYFB_CLOTE</name>
<feature type="chain" id="PRO_0000126872" description="Phenylalanine--tRNA ligase beta subunit">
    <location>
        <begin position="1"/>
        <end position="791"/>
    </location>
</feature>
<feature type="domain" description="tRNA-binding" evidence="1">
    <location>
        <begin position="39"/>
        <end position="149"/>
    </location>
</feature>
<feature type="domain" description="B5" evidence="1">
    <location>
        <begin position="403"/>
        <end position="478"/>
    </location>
</feature>
<feature type="domain" description="FDX-ACB" evidence="1">
    <location>
        <begin position="698"/>
        <end position="791"/>
    </location>
</feature>
<feature type="binding site" evidence="1">
    <location>
        <position position="456"/>
    </location>
    <ligand>
        <name>Mg(2+)</name>
        <dbReference type="ChEBI" id="CHEBI:18420"/>
        <note>shared with alpha subunit</note>
    </ligand>
</feature>
<feature type="binding site" evidence="1">
    <location>
        <position position="462"/>
    </location>
    <ligand>
        <name>Mg(2+)</name>
        <dbReference type="ChEBI" id="CHEBI:18420"/>
        <note>shared with alpha subunit</note>
    </ligand>
</feature>
<feature type="binding site" evidence="1">
    <location>
        <position position="465"/>
    </location>
    <ligand>
        <name>Mg(2+)</name>
        <dbReference type="ChEBI" id="CHEBI:18420"/>
        <note>shared with alpha subunit</note>
    </ligand>
</feature>
<feature type="binding site" evidence="1">
    <location>
        <position position="466"/>
    </location>
    <ligand>
        <name>Mg(2+)</name>
        <dbReference type="ChEBI" id="CHEBI:18420"/>
        <note>shared with alpha subunit</note>
    </ligand>
</feature>
<gene>
    <name evidence="1" type="primary">pheT</name>
    <name type="ordered locus">CTC_02277</name>
</gene>
<reference key="1">
    <citation type="journal article" date="2003" name="Proc. Natl. Acad. Sci. U.S.A.">
        <title>The genome sequence of Clostridium tetani, the causative agent of tetanus disease.</title>
        <authorList>
            <person name="Brueggemann H."/>
            <person name="Baeumer S."/>
            <person name="Fricke W.F."/>
            <person name="Wiezer A."/>
            <person name="Liesegang H."/>
            <person name="Decker I."/>
            <person name="Herzberg C."/>
            <person name="Martinez-Arias R."/>
            <person name="Merkl R."/>
            <person name="Henne A."/>
            <person name="Gottschalk G."/>
        </authorList>
    </citation>
    <scope>NUCLEOTIDE SEQUENCE [LARGE SCALE GENOMIC DNA]</scope>
    <source>
        <strain>Massachusetts / E88</strain>
    </source>
</reference>
<dbReference type="EC" id="6.1.1.20" evidence="1"/>
<dbReference type="EMBL" id="AE015927">
    <property type="protein sequence ID" value="AAO36757.1"/>
    <property type="molecule type" value="Genomic_DNA"/>
</dbReference>
<dbReference type="RefSeq" id="WP_011100418.1">
    <property type="nucleotide sequence ID" value="NC_004557.1"/>
</dbReference>
<dbReference type="SMR" id="Q891T8"/>
<dbReference type="STRING" id="212717.CTC_02277"/>
<dbReference type="GeneID" id="24254273"/>
<dbReference type="KEGG" id="ctc:CTC_02277"/>
<dbReference type="HOGENOM" id="CLU_016891_0_0_9"/>
<dbReference type="OrthoDB" id="9805455at2"/>
<dbReference type="Proteomes" id="UP000001412">
    <property type="component" value="Chromosome"/>
</dbReference>
<dbReference type="GO" id="GO:0009328">
    <property type="term" value="C:phenylalanine-tRNA ligase complex"/>
    <property type="evidence" value="ECO:0007669"/>
    <property type="project" value="TreeGrafter"/>
</dbReference>
<dbReference type="GO" id="GO:0005524">
    <property type="term" value="F:ATP binding"/>
    <property type="evidence" value="ECO:0007669"/>
    <property type="project" value="UniProtKB-UniRule"/>
</dbReference>
<dbReference type="GO" id="GO:0140096">
    <property type="term" value="F:catalytic activity, acting on a protein"/>
    <property type="evidence" value="ECO:0007669"/>
    <property type="project" value="UniProtKB-ARBA"/>
</dbReference>
<dbReference type="GO" id="GO:0000287">
    <property type="term" value="F:magnesium ion binding"/>
    <property type="evidence" value="ECO:0007669"/>
    <property type="project" value="UniProtKB-UniRule"/>
</dbReference>
<dbReference type="GO" id="GO:0004826">
    <property type="term" value="F:phenylalanine-tRNA ligase activity"/>
    <property type="evidence" value="ECO:0007669"/>
    <property type="project" value="UniProtKB-UniRule"/>
</dbReference>
<dbReference type="GO" id="GO:0016740">
    <property type="term" value="F:transferase activity"/>
    <property type="evidence" value="ECO:0007669"/>
    <property type="project" value="UniProtKB-ARBA"/>
</dbReference>
<dbReference type="GO" id="GO:0000049">
    <property type="term" value="F:tRNA binding"/>
    <property type="evidence" value="ECO:0007669"/>
    <property type="project" value="UniProtKB-KW"/>
</dbReference>
<dbReference type="GO" id="GO:0006432">
    <property type="term" value="P:phenylalanyl-tRNA aminoacylation"/>
    <property type="evidence" value="ECO:0007669"/>
    <property type="project" value="UniProtKB-UniRule"/>
</dbReference>
<dbReference type="CDD" id="cd00769">
    <property type="entry name" value="PheRS_beta_core"/>
    <property type="match status" value="1"/>
</dbReference>
<dbReference type="CDD" id="cd02796">
    <property type="entry name" value="tRNA_bind_bactPheRS"/>
    <property type="match status" value="1"/>
</dbReference>
<dbReference type="FunFam" id="2.40.50.140:FF:000045">
    <property type="entry name" value="Phenylalanine--tRNA ligase beta subunit"/>
    <property type="match status" value="1"/>
</dbReference>
<dbReference type="FunFam" id="3.30.56.10:FF:000002">
    <property type="entry name" value="Phenylalanine--tRNA ligase beta subunit"/>
    <property type="match status" value="1"/>
</dbReference>
<dbReference type="FunFam" id="3.30.70.380:FF:000001">
    <property type="entry name" value="Phenylalanine--tRNA ligase beta subunit"/>
    <property type="match status" value="1"/>
</dbReference>
<dbReference type="FunFam" id="3.50.40.10:FF:000001">
    <property type="entry name" value="Phenylalanine--tRNA ligase beta subunit"/>
    <property type="match status" value="1"/>
</dbReference>
<dbReference type="Gene3D" id="3.30.56.10">
    <property type="match status" value="2"/>
</dbReference>
<dbReference type="Gene3D" id="3.30.930.10">
    <property type="entry name" value="Bira Bifunctional Protein, Domain 2"/>
    <property type="match status" value="1"/>
</dbReference>
<dbReference type="Gene3D" id="3.30.70.380">
    <property type="entry name" value="Ferrodoxin-fold anticodon-binding domain"/>
    <property type="match status" value="1"/>
</dbReference>
<dbReference type="Gene3D" id="2.40.50.140">
    <property type="entry name" value="Nucleic acid-binding proteins"/>
    <property type="match status" value="1"/>
</dbReference>
<dbReference type="Gene3D" id="3.50.40.10">
    <property type="entry name" value="Phenylalanyl-trna Synthetase, Chain B, domain 3"/>
    <property type="match status" value="1"/>
</dbReference>
<dbReference type="HAMAP" id="MF_00283">
    <property type="entry name" value="Phe_tRNA_synth_beta1"/>
    <property type="match status" value="1"/>
</dbReference>
<dbReference type="InterPro" id="IPR045864">
    <property type="entry name" value="aa-tRNA-synth_II/BPL/LPL"/>
</dbReference>
<dbReference type="InterPro" id="IPR005146">
    <property type="entry name" value="B3/B4_tRNA-bd"/>
</dbReference>
<dbReference type="InterPro" id="IPR009061">
    <property type="entry name" value="DNA-bd_dom_put_sf"/>
</dbReference>
<dbReference type="InterPro" id="IPR005121">
    <property type="entry name" value="Fdx_antiC-bd"/>
</dbReference>
<dbReference type="InterPro" id="IPR036690">
    <property type="entry name" value="Fdx_antiC-bd_sf"/>
</dbReference>
<dbReference type="InterPro" id="IPR012340">
    <property type="entry name" value="NA-bd_OB-fold"/>
</dbReference>
<dbReference type="InterPro" id="IPR045060">
    <property type="entry name" value="Phe-tRNA-ligase_IIc_bsu"/>
</dbReference>
<dbReference type="InterPro" id="IPR004532">
    <property type="entry name" value="Phe-tRNA-ligase_IIc_bsu_bact"/>
</dbReference>
<dbReference type="InterPro" id="IPR020825">
    <property type="entry name" value="Phe-tRNA_synthase-like_B3/B4"/>
</dbReference>
<dbReference type="InterPro" id="IPR041616">
    <property type="entry name" value="PheRS_beta_core"/>
</dbReference>
<dbReference type="InterPro" id="IPR002547">
    <property type="entry name" value="tRNA-bd_dom"/>
</dbReference>
<dbReference type="InterPro" id="IPR033714">
    <property type="entry name" value="tRNA_bind_bactPheRS"/>
</dbReference>
<dbReference type="InterPro" id="IPR005147">
    <property type="entry name" value="tRNA_synthase_B5-dom"/>
</dbReference>
<dbReference type="NCBIfam" id="TIGR00472">
    <property type="entry name" value="pheT_bact"/>
    <property type="match status" value="1"/>
</dbReference>
<dbReference type="NCBIfam" id="NF045760">
    <property type="entry name" value="YtpR"/>
    <property type="match status" value="1"/>
</dbReference>
<dbReference type="PANTHER" id="PTHR10947:SF0">
    <property type="entry name" value="PHENYLALANINE--TRNA LIGASE BETA SUBUNIT"/>
    <property type="match status" value="1"/>
</dbReference>
<dbReference type="PANTHER" id="PTHR10947">
    <property type="entry name" value="PHENYLALANYL-TRNA SYNTHETASE BETA CHAIN AND LEUCINE-RICH REPEAT-CONTAINING PROTEIN 47"/>
    <property type="match status" value="1"/>
</dbReference>
<dbReference type="Pfam" id="PF03483">
    <property type="entry name" value="B3_4"/>
    <property type="match status" value="1"/>
</dbReference>
<dbReference type="Pfam" id="PF03484">
    <property type="entry name" value="B5"/>
    <property type="match status" value="1"/>
</dbReference>
<dbReference type="Pfam" id="PF03147">
    <property type="entry name" value="FDX-ACB"/>
    <property type="match status" value="1"/>
</dbReference>
<dbReference type="Pfam" id="PF01588">
    <property type="entry name" value="tRNA_bind"/>
    <property type="match status" value="1"/>
</dbReference>
<dbReference type="Pfam" id="PF17759">
    <property type="entry name" value="tRNA_synthFbeta"/>
    <property type="match status" value="1"/>
</dbReference>
<dbReference type="SMART" id="SM00873">
    <property type="entry name" value="B3_4"/>
    <property type="match status" value="1"/>
</dbReference>
<dbReference type="SMART" id="SM00874">
    <property type="entry name" value="B5"/>
    <property type="match status" value="1"/>
</dbReference>
<dbReference type="SMART" id="SM00896">
    <property type="entry name" value="FDX-ACB"/>
    <property type="match status" value="1"/>
</dbReference>
<dbReference type="SUPFAM" id="SSF54991">
    <property type="entry name" value="Anticodon-binding domain of PheRS"/>
    <property type="match status" value="1"/>
</dbReference>
<dbReference type="SUPFAM" id="SSF55681">
    <property type="entry name" value="Class II aaRS and biotin synthetases"/>
    <property type="match status" value="1"/>
</dbReference>
<dbReference type="SUPFAM" id="SSF50249">
    <property type="entry name" value="Nucleic acid-binding proteins"/>
    <property type="match status" value="1"/>
</dbReference>
<dbReference type="SUPFAM" id="SSF56037">
    <property type="entry name" value="PheT/TilS domain"/>
    <property type="match status" value="1"/>
</dbReference>
<dbReference type="SUPFAM" id="SSF46955">
    <property type="entry name" value="Putative DNA-binding domain"/>
    <property type="match status" value="1"/>
</dbReference>
<dbReference type="PROSITE" id="PS51483">
    <property type="entry name" value="B5"/>
    <property type="match status" value="1"/>
</dbReference>
<dbReference type="PROSITE" id="PS51447">
    <property type="entry name" value="FDX_ACB"/>
    <property type="match status" value="1"/>
</dbReference>
<dbReference type="PROSITE" id="PS50886">
    <property type="entry name" value="TRBD"/>
    <property type="match status" value="1"/>
</dbReference>
<sequence length="791" mass="88924">MKVPFKWLKDYVNINISANELGDRLTLSGSKVEEIISSGDEIQNVVTGKIEKIERHPDADKLVVCSVNIGKEEPIQIVTGANNMKEEDIVPVAVHGAVLPNDVKIKKGKLRGIMSNGMMCSEKELGMPESGVDGLMILPSDTAIGKDIKEVLDLDNAVIEFEITSNRPDCLSVVGIARETAATLGIKYTMPKLDYTPKNKANIKDSLEVEIRDDLCRRYMARGVKNVKIQESPEWMQERLEEAGVRAINNIVDITNFVMLELGQPLHAFDGRQITSNKIVIEKGKVGEKFATLDKVERTIDESVLCIKDGDRAVALAGIMGGLNSEVKEDTKEIILECANFDGTNIRVSSKKLGLRTESSSKFEKDLDPNLVEIAMDRVCHLIEELDAGEVMEGTIDIYKNPIKERNLKVDSNWMNKFLGTDISKEDMKEYLDRLELKTDVEGDTLNITVPTFRSDIVLKQDVAEEIARIYGYNNIPTTMFNSVSKRAGKTLKQHLEDKVVEILIGSGLNQSISYSFVSPKIFDKILIPKDNDLRNTVKIKNPLGEDYSLMRTTTLASMMEALSRNYSRNNSYARLFEMGKVYIPSQDEKVLPEERNTLVIGMYGEVDYLNLKGILENLIEELNIEKSSYKRESEHPTFHPGKTAKLYVNKEFAGLLGEIHPDVLDNYDIDEKCYIAELNLDVLFKNANIEKKYKALPKFPAVDRDMALLVDDEVLVQDIESIIRNKGGKILEDVKLFDVYKGAQIPEGKKSVAYSIVYRMPNRTLTDAEVNKVHDKIVRTLENNLGAELR</sequence>
<keyword id="KW-0030">Aminoacyl-tRNA synthetase</keyword>
<keyword id="KW-0067">ATP-binding</keyword>
<keyword id="KW-0963">Cytoplasm</keyword>
<keyword id="KW-0436">Ligase</keyword>
<keyword id="KW-0460">Magnesium</keyword>
<keyword id="KW-0479">Metal-binding</keyword>
<keyword id="KW-0547">Nucleotide-binding</keyword>
<keyword id="KW-0648">Protein biosynthesis</keyword>
<keyword id="KW-1185">Reference proteome</keyword>
<keyword id="KW-0694">RNA-binding</keyword>
<keyword id="KW-0820">tRNA-binding</keyword>
<accession>Q891T8</accession>
<evidence type="ECO:0000255" key="1">
    <source>
        <dbReference type="HAMAP-Rule" id="MF_00283"/>
    </source>
</evidence>